<proteinExistence type="inferred from homology"/>
<dbReference type="EMBL" id="AE004439">
    <property type="protein sequence ID" value="AAK03476.1"/>
    <property type="molecule type" value="Genomic_DNA"/>
</dbReference>
<dbReference type="RefSeq" id="WP_005701868.1">
    <property type="nucleotide sequence ID" value="NC_002663.1"/>
</dbReference>
<dbReference type="SMR" id="Q9CL52"/>
<dbReference type="STRING" id="272843.PM1392"/>
<dbReference type="EnsemblBacteria" id="AAK03476">
    <property type="protein sequence ID" value="AAK03476"/>
    <property type="gene ID" value="PM1392"/>
</dbReference>
<dbReference type="GeneID" id="77207049"/>
<dbReference type="KEGG" id="pmu:PM1392"/>
<dbReference type="HOGENOM" id="CLU_072439_5_0_6"/>
<dbReference type="OrthoDB" id="9806415at2"/>
<dbReference type="Proteomes" id="UP000000809">
    <property type="component" value="Chromosome"/>
</dbReference>
<dbReference type="GO" id="GO:1990904">
    <property type="term" value="C:ribonucleoprotein complex"/>
    <property type="evidence" value="ECO:0007669"/>
    <property type="project" value="UniProtKB-KW"/>
</dbReference>
<dbReference type="GO" id="GO:0005840">
    <property type="term" value="C:ribosome"/>
    <property type="evidence" value="ECO:0007669"/>
    <property type="project" value="UniProtKB-KW"/>
</dbReference>
<dbReference type="GO" id="GO:0019843">
    <property type="term" value="F:rRNA binding"/>
    <property type="evidence" value="ECO:0007669"/>
    <property type="project" value="UniProtKB-UniRule"/>
</dbReference>
<dbReference type="GO" id="GO:0003735">
    <property type="term" value="F:structural constituent of ribosome"/>
    <property type="evidence" value="ECO:0007669"/>
    <property type="project" value="InterPro"/>
</dbReference>
<dbReference type="GO" id="GO:0006412">
    <property type="term" value="P:translation"/>
    <property type="evidence" value="ECO:0007669"/>
    <property type="project" value="UniProtKB-UniRule"/>
</dbReference>
<dbReference type="FunFam" id="3.30.420.80:FF:000001">
    <property type="entry name" value="30S ribosomal protein S11"/>
    <property type="match status" value="1"/>
</dbReference>
<dbReference type="Gene3D" id="3.30.420.80">
    <property type="entry name" value="Ribosomal protein S11"/>
    <property type="match status" value="1"/>
</dbReference>
<dbReference type="HAMAP" id="MF_01310">
    <property type="entry name" value="Ribosomal_uS11"/>
    <property type="match status" value="1"/>
</dbReference>
<dbReference type="InterPro" id="IPR001971">
    <property type="entry name" value="Ribosomal_uS11"/>
</dbReference>
<dbReference type="InterPro" id="IPR019981">
    <property type="entry name" value="Ribosomal_uS11_bac-type"/>
</dbReference>
<dbReference type="InterPro" id="IPR018102">
    <property type="entry name" value="Ribosomal_uS11_CS"/>
</dbReference>
<dbReference type="InterPro" id="IPR036967">
    <property type="entry name" value="Ribosomal_uS11_sf"/>
</dbReference>
<dbReference type="NCBIfam" id="NF003698">
    <property type="entry name" value="PRK05309.1"/>
    <property type="match status" value="1"/>
</dbReference>
<dbReference type="NCBIfam" id="TIGR03632">
    <property type="entry name" value="uS11_bact"/>
    <property type="match status" value="1"/>
</dbReference>
<dbReference type="PANTHER" id="PTHR11759">
    <property type="entry name" value="40S RIBOSOMAL PROTEIN S14/30S RIBOSOMAL PROTEIN S11"/>
    <property type="match status" value="1"/>
</dbReference>
<dbReference type="Pfam" id="PF00411">
    <property type="entry name" value="Ribosomal_S11"/>
    <property type="match status" value="1"/>
</dbReference>
<dbReference type="PIRSF" id="PIRSF002131">
    <property type="entry name" value="Ribosomal_S11"/>
    <property type="match status" value="1"/>
</dbReference>
<dbReference type="SUPFAM" id="SSF53137">
    <property type="entry name" value="Translational machinery components"/>
    <property type="match status" value="1"/>
</dbReference>
<dbReference type="PROSITE" id="PS00054">
    <property type="entry name" value="RIBOSOMAL_S11"/>
    <property type="match status" value="1"/>
</dbReference>
<gene>
    <name evidence="1" type="primary">rpsK</name>
    <name evidence="1" type="synonym">rps11</name>
    <name type="ordered locus">PM1392</name>
</gene>
<reference key="1">
    <citation type="journal article" date="2001" name="Proc. Natl. Acad. Sci. U.S.A.">
        <title>Complete genomic sequence of Pasteurella multocida Pm70.</title>
        <authorList>
            <person name="May B.J."/>
            <person name="Zhang Q."/>
            <person name="Li L.L."/>
            <person name="Paustian M.L."/>
            <person name="Whittam T.S."/>
            <person name="Kapur V."/>
        </authorList>
    </citation>
    <scope>NUCLEOTIDE SEQUENCE [LARGE SCALE GENOMIC DNA]</scope>
    <source>
        <strain>Pm70</strain>
    </source>
</reference>
<evidence type="ECO:0000255" key="1">
    <source>
        <dbReference type="HAMAP-Rule" id="MF_01310"/>
    </source>
</evidence>
<evidence type="ECO:0000305" key="2"/>
<protein>
    <recommendedName>
        <fullName evidence="1">Small ribosomal subunit protein uS11</fullName>
    </recommendedName>
    <alternativeName>
        <fullName evidence="2">30S ribosomal protein S11</fullName>
    </alternativeName>
</protein>
<accession>Q9CL52</accession>
<feature type="chain" id="PRO_0000123193" description="Small ribosomal subunit protein uS11">
    <location>
        <begin position="1"/>
        <end position="129"/>
    </location>
</feature>
<comment type="function">
    <text evidence="1">Located on the platform of the 30S subunit, it bridges several disparate RNA helices of the 16S rRNA. Forms part of the Shine-Dalgarno cleft in the 70S ribosome.</text>
</comment>
<comment type="subunit">
    <text evidence="1">Part of the 30S ribosomal subunit. Interacts with proteins S7 and S18. Binds to IF-3.</text>
</comment>
<comment type="similarity">
    <text evidence="1">Belongs to the universal ribosomal protein uS11 family.</text>
</comment>
<keyword id="KW-1185">Reference proteome</keyword>
<keyword id="KW-0687">Ribonucleoprotein</keyword>
<keyword id="KW-0689">Ribosomal protein</keyword>
<keyword id="KW-0694">RNA-binding</keyword>
<keyword id="KW-0699">rRNA-binding</keyword>
<organism>
    <name type="scientific">Pasteurella multocida (strain Pm70)</name>
    <dbReference type="NCBI Taxonomy" id="272843"/>
    <lineage>
        <taxon>Bacteria</taxon>
        <taxon>Pseudomonadati</taxon>
        <taxon>Pseudomonadota</taxon>
        <taxon>Gammaproteobacteria</taxon>
        <taxon>Pasteurellales</taxon>
        <taxon>Pasteurellaceae</taxon>
        <taxon>Pasteurella</taxon>
    </lineage>
</organism>
<sequence length="129" mass="13885">MAKTPVRARKRVKKQVVDGVAHIHASFNNTIVTITDRQGNALAWATAGGSGFRGSRKSTPFAAQVAAERCAEVVKEFGLKNLEVMVKGPGPGRESTIRALNAAGFRITNITDVTPIPHNGCRPPKKRRV</sequence>
<name>RS11_PASMU</name>